<keyword id="KW-0028">Amino-acid biosynthesis</keyword>
<keyword id="KW-0057">Aromatic amino acid biosynthesis</keyword>
<keyword id="KW-0903">Direct protein sequencing</keyword>
<keyword id="KW-0328">Glycosyltransferase</keyword>
<keyword id="KW-0460">Magnesium</keyword>
<keyword id="KW-0479">Metal-binding</keyword>
<keyword id="KW-0808">Transferase</keyword>
<keyword id="KW-0822">Tryptophan biosynthesis</keyword>
<feature type="chain" id="PRO_0000154477" description="Anthranilate phosphoribosyltransferase">
    <location>
        <begin position="1"/>
        <end position="38" status="greater than"/>
    </location>
</feature>
<feature type="non-terminal residue">
    <location>
        <position position="38"/>
    </location>
</feature>
<sequence length="38" mass="4308">MQPILEKLYRAESMSQQESQQLFSAIVRGELEPSQLAA</sequence>
<accession>P12321</accession>
<organism>
    <name type="scientific">Serratia marcescens</name>
    <dbReference type="NCBI Taxonomy" id="615"/>
    <lineage>
        <taxon>Bacteria</taxon>
        <taxon>Pseudomonadati</taxon>
        <taxon>Pseudomonadota</taxon>
        <taxon>Gammaproteobacteria</taxon>
        <taxon>Enterobacterales</taxon>
        <taxon>Yersiniaceae</taxon>
        <taxon>Serratia</taxon>
    </lineage>
</organism>
<proteinExistence type="evidence at protein level"/>
<reference key="1">
    <citation type="journal article" date="1976" name="Eur. J. Biochem.">
        <title>Purification, subunit structure and partial amino-acid sequence of anthranilate-5-phosphoribosylpyrophosphate phosphoribosyltransferase from the enteric bacterium Serratia marcescens.</title>
        <authorList>
            <person name="Largen M."/>
            <person name="Mills S.E."/>
            <person name="Rowe J."/>
            <person name="Yanofsky C."/>
        </authorList>
    </citation>
    <scope>PROTEIN SEQUENCE</scope>
    <source>
        <strain>TRPE7</strain>
    </source>
</reference>
<protein>
    <recommendedName>
        <fullName>Anthranilate phosphoribosyltransferase</fullName>
        <ecNumber>2.4.2.18</ecNumber>
    </recommendedName>
</protein>
<evidence type="ECO:0000250" key="1"/>
<evidence type="ECO:0000305" key="2"/>
<name>TRPD_SERMA</name>
<comment type="function">
    <text evidence="1">Catalyzes the transfer of the phosphoribosyl group of 5-phosphorylribose-1-pyrophosphate (PRPP) to anthranilate to yield N-(5'-phosphoribosyl)-anthranilate (PRA).</text>
</comment>
<comment type="catalytic activity">
    <reaction>
        <text>N-(5-phospho-beta-D-ribosyl)anthranilate + diphosphate = 5-phospho-alpha-D-ribose 1-diphosphate + anthranilate</text>
        <dbReference type="Rhea" id="RHEA:11768"/>
        <dbReference type="ChEBI" id="CHEBI:16567"/>
        <dbReference type="ChEBI" id="CHEBI:18277"/>
        <dbReference type="ChEBI" id="CHEBI:33019"/>
        <dbReference type="ChEBI" id="CHEBI:58017"/>
        <dbReference type="EC" id="2.4.2.18"/>
    </reaction>
</comment>
<comment type="pathway">
    <text>Amino-acid biosynthesis; L-tryptophan biosynthesis; L-tryptophan from chorismate: step 2/5.</text>
</comment>
<comment type="subunit">
    <text evidence="1">Homodimer.</text>
</comment>
<comment type="similarity">
    <text evidence="2">Belongs to the anthranilate phosphoribosyltransferase family.</text>
</comment>
<gene>
    <name type="primary">trpD</name>
</gene>
<dbReference type="EC" id="2.4.2.18"/>
<dbReference type="PIR" id="A05222">
    <property type="entry name" value="A05222"/>
</dbReference>
<dbReference type="SMR" id="P12321"/>
<dbReference type="STRING" id="273526.SMDB11_1935"/>
<dbReference type="UniPathway" id="UPA00035">
    <property type="reaction ID" value="UER00041"/>
</dbReference>
<dbReference type="GO" id="GO:0004048">
    <property type="term" value="F:anthranilate phosphoribosyltransferase activity"/>
    <property type="evidence" value="ECO:0007669"/>
    <property type="project" value="UniProtKB-EC"/>
</dbReference>
<dbReference type="GO" id="GO:0046872">
    <property type="term" value="F:metal ion binding"/>
    <property type="evidence" value="ECO:0007669"/>
    <property type="project" value="UniProtKB-KW"/>
</dbReference>
<dbReference type="GO" id="GO:0000162">
    <property type="term" value="P:L-tryptophan biosynthetic process"/>
    <property type="evidence" value="ECO:0007669"/>
    <property type="project" value="UniProtKB-UniPathway"/>
</dbReference>
<dbReference type="Gene3D" id="1.20.970.10">
    <property type="entry name" value="Transferase, Pyrimidine Nucleoside Phosphorylase, Chain C"/>
    <property type="match status" value="1"/>
</dbReference>
<dbReference type="InterPro" id="IPR017459">
    <property type="entry name" value="Glycosyl_Trfase_fam3_N_dom"/>
</dbReference>
<dbReference type="InterPro" id="IPR036320">
    <property type="entry name" value="Glycosyl_Trfase_fam3_N_dom_sf"/>
</dbReference>
<dbReference type="Pfam" id="PF02885">
    <property type="entry name" value="Glycos_trans_3N"/>
    <property type="match status" value="1"/>
</dbReference>
<dbReference type="SUPFAM" id="SSF47648">
    <property type="entry name" value="Nucleoside phosphorylase/phosphoribosyltransferase N-terminal domain"/>
    <property type="match status" value="1"/>
</dbReference>